<evidence type="ECO:0000250" key="1">
    <source>
        <dbReference type="UniProtKB" id="A9JX08"/>
    </source>
</evidence>
<evidence type="ECO:0000305" key="2"/>
<keyword id="KW-0204">Cytolysis</keyword>
<keyword id="KW-0843">Virulence</keyword>
<accession>P0C826</accession>
<name>PSMA4_STAAS</name>
<comment type="function">
    <text evidence="1">Peptide which can recruit, activate and subsequently lyse human neutrophils, thus eliminating the main cellular defense against infection.</text>
</comment>
<comment type="similarity">
    <text evidence="2">Belongs to the phenol-soluble modulin alpha peptides family.</text>
</comment>
<protein>
    <recommendedName>
        <fullName>Phenol-soluble modulin alpha 4 peptide</fullName>
    </recommendedName>
</protein>
<sequence length="20" mass="2172">MAIVGTIIKIIKAIIDIFAK</sequence>
<dbReference type="EMBL" id="BX571857">
    <property type="status" value="NOT_ANNOTATED_CDS"/>
    <property type="molecule type" value="Genomic_DNA"/>
</dbReference>
<dbReference type="SMR" id="P0C826"/>
<dbReference type="GO" id="GO:0031640">
    <property type="term" value="P:killing of cells of another organism"/>
    <property type="evidence" value="ECO:0007669"/>
    <property type="project" value="UniProtKB-KW"/>
</dbReference>
<dbReference type="InterPro" id="IPR031429">
    <property type="entry name" value="PSM_alpha"/>
</dbReference>
<dbReference type="Pfam" id="PF17063">
    <property type="entry name" value="PSMalpha"/>
    <property type="match status" value="1"/>
</dbReference>
<organism>
    <name type="scientific">Staphylococcus aureus (strain MSSA476)</name>
    <dbReference type="NCBI Taxonomy" id="282459"/>
    <lineage>
        <taxon>Bacteria</taxon>
        <taxon>Bacillati</taxon>
        <taxon>Bacillota</taxon>
        <taxon>Bacilli</taxon>
        <taxon>Bacillales</taxon>
        <taxon>Staphylococcaceae</taxon>
        <taxon>Staphylococcus</taxon>
    </lineage>
</organism>
<feature type="peptide" id="PRO_0000345082" description="Phenol-soluble modulin alpha 4 peptide">
    <location>
        <begin position="1"/>
        <end position="20"/>
    </location>
</feature>
<reference key="1">
    <citation type="journal article" date="2004" name="Proc. Natl. Acad. Sci. U.S.A.">
        <title>Complete genomes of two clinical Staphylococcus aureus strains: evidence for the rapid evolution of virulence and drug resistance.</title>
        <authorList>
            <person name="Holden M.T.G."/>
            <person name="Feil E.J."/>
            <person name="Lindsay J.A."/>
            <person name="Peacock S.J."/>
            <person name="Day N.P.J."/>
            <person name="Enright M.C."/>
            <person name="Foster T.J."/>
            <person name="Moore C.E."/>
            <person name="Hurst L."/>
            <person name="Atkin R."/>
            <person name="Barron A."/>
            <person name="Bason N."/>
            <person name="Bentley S.D."/>
            <person name="Chillingworth C."/>
            <person name="Chillingworth T."/>
            <person name="Churcher C."/>
            <person name="Clark L."/>
            <person name="Corton C."/>
            <person name="Cronin A."/>
            <person name="Doggett J."/>
            <person name="Dowd L."/>
            <person name="Feltwell T."/>
            <person name="Hance Z."/>
            <person name="Harris B."/>
            <person name="Hauser H."/>
            <person name="Holroyd S."/>
            <person name="Jagels K."/>
            <person name="James K.D."/>
            <person name="Lennard N."/>
            <person name="Line A."/>
            <person name="Mayes R."/>
            <person name="Moule S."/>
            <person name="Mungall K."/>
            <person name="Ormond D."/>
            <person name="Quail M.A."/>
            <person name="Rabbinowitsch E."/>
            <person name="Rutherford K.M."/>
            <person name="Sanders M."/>
            <person name="Sharp S."/>
            <person name="Simmonds M."/>
            <person name="Stevens K."/>
            <person name="Whitehead S."/>
            <person name="Barrell B.G."/>
            <person name="Spratt B.G."/>
            <person name="Parkhill J."/>
        </authorList>
    </citation>
    <scope>NUCLEOTIDE SEQUENCE [LARGE SCALE GENOMIC DNA]</scope>
    <source>
        <strain>MSSA476</strain>
    </source>
</reference>
<proteinExistence type="inferred from homology"/>
<gene>
    <name type="primary">psmA4</name>
    <name type="ordered locus">SAS0409.1</name>
</gene>